<reference key="1">
    <citation type="journal article" date="2007" name="PLoS Genet.">
        <title>Being pathogenic, plastic, and sexual while living with a nearly minimal bacterial genome.</title>
        <authorList>
            <person name="Sirand-Pugnet P."/>
            <person name="Lartigue C."/>
            <person name="Marenda M."/>
            <person name="Jacob D."/>
            <person name="Barre A."/>
            <person name="Barbe V."/>
            <person name="Schenowitz C."/>
            <person name="Mangenot S."/>
            <person name="Couloux A."/>
            <person name="Segurens B."/>
            <person name="de Daruvar A."/>
            <person name="Blanchard A."/>
            <person name="Citti C."/>
        </authorList>
    </citation>
    <scope>NUCLEOTIDE SEQUENCE [LARGE SCALE GENOMIC DNA]</scope>
    <source>
        <strain>NCTC 10123 / CIP 59.7 / PG2</strain>
    </source>
</reference>
<gene>
    <name evidence="1" type="primary">rplO</name>
    <name type="ordered locus">MAG5290</name>
</gene>
<sequence length="144" mass="15760">MKLHTLKSTPGARVEKHRVGRGHAAGKGKQAGKGQSGQNKRHGHRLGFEGGQTPWFRRIGKRGFTNVNHVEYQVVNLKDLEQNFKANATVDLESLFKANLIKRSMPVKLLGNGKLTKKLNVTLHAASKSAIDAVEQAGGKFTIL</sequence>
<feature type="chain" id="PRO_1000142846" description="Large ribosomal subunit protein uL15">
    <location>
        <begin position="1"/>
        <end position="144"/>
    </location>
</feature>
<feature type="region of interest" description="Disordered" evidence="2">
    <location>
        <begin position="1"/>
        <end position="52"/>
    </location>
</feature>
<feature type="compositionally biased region" description="Basic residues" evidence="2">
    <location>
        <begin position="15"/>
        <end position="26"/>
    </location>
</feature>
<name>RL15_MYCAP</name>
<keyword id="KW-1185">Reference proteome</keyword>
<keyword id="KW-0687">Ribonucleoprotein</keyword>
<keyword id="KW-0689">Ribosomal protein</keyword>
<keyword id="KW-0694">RNA-binding</keyword>
<keyword id="KW-0699">rRNA-binding</keyword>
<comment type="function">
    <text evidence="1">Binds to the 23S rRNA.</text>
</comment>
<comment type="subunit">
    <text evidence="1">Part of the 50S ribosomal subunit.</text>
</comment>
<comment type="similarity">
    <text evidence="1">Belongs to the universal ribosomal protein uL15 family.</text>
</comment>
<proteinExistence type="inferred from homology"/>
<organism>
    <name type="scientific">Mycoplasmopsis agalactiae (strain NCTC 10123 / CIP 59.7 / PG2)</name>
    <name type="common">Mycoplasma agalactiae</name>
    <dbReference type="NCBI Taxonomy" id="347257"/>
    <lineage>
        <taxon>Bacteria</taxon>
        <taxon>Bacillati</taxon>
        <taxon>Mycoplasmatota</taxon>
        <taxon>Mycoplasmoidales</taxon>
        <taxon>Metamycoplasmataceae</taxon>
        <taxon>Mycoplasmopsis</taxon>
    </lineage>
</organism>
<protein>
    <recommendedName>
        <fullName evidence="1">Large ribosomal subunit protein uL15</fullName>
    </recommendedName>
    <alternativeName>
        <fullName evidence="3">50S ribosomal protein L15</fullName>
    </alternativeName>
</protein>
<dbReference type="EMBL" id="CU179680">
    <property type="protein sequence ID" value="CAL59227.1"/>
    <property type="molecule type" value="Genomic_DNA"/>
</dbReference>
<dbReference type="RefSeq" id="WP_011949692.1">
    <property type="nucleotide sequence ID" value="NC_009497.1"/>
</dbReference>
<dbReference type="SMR" id="A5IYW8"/>
<dbReference type="STRING" id="347257.MAG5290"/>
<dbReference type="GeneID" id="93358272"/>
<dbReference type="KEGG" id="maa:MAG5290"/>
<dbReference type="HOGENOM" id="CLU_055188_4_1_14"/>
<dbReference type="Proteomes" id="UP000007065">
    <property type="component" value="Chromosome"/>
</dbReference>
<dbReference type="GO" id="GO:0022625">
    <property type="term" value="C:cytosolic large ribosomal subunit"/>
    <property type="evidence" value="ECO:0007669"/>
    <property type="project" value="TreeGrafter"/>
</dbReference>
<dbReference type="GO" id="GO:0019843">
    <property type="term" value="F:rRNA binding"/>
    <property type="evidence" value="ECO:0007669"/>
    <property type="project" value="UniProtKB-UniRule"/>
</dbReference>
<dbReference type="GO" id="GO:0003735">
    <property type="term" value="F:structural constituent of ribosome"/>
    <property type="evidence" value="ECO:0007669"/>
    <property type="project" value="InterPro"/>
</dbReference>
<dbReference type="GO" id="GO:0006412">
    <property type="term" value="P:translation"/>
    <property type="evidence" value="ECO:0007669"/>
    <property type="project" value="UniProtKB-UniRule"/>
</dbReference>
<dbReference type="Gene3D" id="3.100.10.10">
    <property type="match status" value="1"/>
</dbReference>
<dbReference type="HAMAP" id="MF_01341">
    <property type="entry name" value="Ribosomal_uL15"/>
    <property type="match status" value="1"/>
</dbReference>
<dbReference type="InterPro" id="IPR030878">
    <property type="entry name" value="Ribosomal_uL15"/>
</dbReference>
<dbReference type="InterPro" id="IPR021131">
    <property type="entry name" value="Ribosomal_uL15/eL18"/>
</dbReference>
<dbReference type="InterPro" id="IPR036227">
    <property type="entry name" value="Ribosomal_uL15/eL18_sf"/>
</dbReference>
<dbReference type="InterPro" id="IPR005749">
    <property type="entry name" value="Ribosomal_uL15_bac-type"/>
</dbReference>
<dbReference type="InterPro" id="IPR001196">
    <property type="entry name" value="Ribosomal_uL15_CS"/>
</dbReference>
<dbReference type="NCBIfam" id="TIGR01071">
    <property type="entry name" value="rplO_bact"/>
    <property type="match status" value="1"/>
</dbReference>
<dbReference type="PANTHER" id="PTHR12934">
    <property type="entry name" value="50S RIBOSOMAL PROTEIN L15"/>
    <property type="match status" value="1"/>
</dbReference>
<dbReference type="PANTHER" id="PTHR12934:SF11">
    <property type="entry name" value="LARGE RIBOSOMAL SUBUNIT PROTEIN UL15M"/>
    <property type="match status" value="1"/>
</dbReference>
<dbReference type="Pfam" id="PF00828">
    <property type="entry name" value="Ribosomal_L27A"/>
    <property type="match status" value="1"/>
</dbReference>
<dbReference type="SUPFAM" id="SSF52080">
    <property type="entry name" value="Ribosomal proteins L15p and L18e"/>
    <property type="match status" value="1"/>
</dbReference>
<dbReference type="PROSITE" id="PS00475">
    <property type="entry name" value="RIBOSOMAL_L15"/>
    <property type="match status" value="1"/>
</dbReference>
<accession>A5IYW8</accession>
<evidence type="ECO:0000255" key="1">
    <source>
        <dbReference type="HAMAP-Rule" id="MF_01341"/>
    </source>
</evidence>
<evidence type="ECO:0000256" key="2">
    <source>
        <dbReference type="SAM" id="MobiDB-lite"/>
    </source>
</evidence>
<evidence type="ECO:0000305" key="3"/>